<proteinExistence type="inferred from homology"/>
<reference key="1">
    <citation type="journal article" date="2006" name="Nat. Genet.">
        <title>The multidrug-resistant human pathogen Clostridium difficile has a highly mobile, mosaic genome.</title>
        <authorList>
            <person name="Sebaihia M."/>
            <person name="Wren B.W."/>
            <person name="Mullany P."/>
            <person name="Fairweather N.F."/>
            <person name="Minton N."/>
            <person name="Stabler R."/>
            <person name="Thomson N.R."/>
            <person name="Roberts A.P."/>
            <person name="Cerdeno-Tarraga A.M."/>
            <person name="Wang H."/>
            <person name="Holden M.T.G."/>
            <person name="Wright A."/>
            <person name="Churcher C."/>
            <person name="Quail M.A."/>
            <person name="Baker S."/>
            <person name="Bason N."/>
            <person name="Brooks K."/>
            <person name="Chillingworth T."/>
            <person name="Cronin A."/>
            <person name="Davis P."/>
            <person name="Dowd L."/>
            <person name="Fraser A."/>
            <person name="Feltwell T."/>
            <person name="Hance Z."/>
            <person name="Holroyd S."/>
            <person name="Jagels K."/>
            <person name="Moule S."/>
            <person name="Mungall K."/>
            <person name="Price C."/>
            <person name="Rabbinowitsch E."/>
            <person name="Sharp S."/>
            <person name="Simmonds M."/>
            <person name="Stevens K."/>
            <person name="Unwin L."/>
            <person name="Whithead S."/>
            <person name="Dupuy B."/>
            <person name="Dougan G."/>
            <person name="Barrell B."/>
            <person name="Parkhill J."/>
        </authorList>
    </citation>
    <scope>NUCLEOTIDE SEQUENCE [LARGE SCALE GENOMIC DNA]</scope>
    <source>
        <strain>630</strain>
    </source>
</reference>
<gene>
    <name evidence="1" type="primary">greA</name>
    <name type="ordered locus">CD630_35530</name>
</gene>
<name>GREA_CLOD6</name>
<feature type="chain" id="PRO_1000034255" description="Transcription elongation factor GreA">
    <location>
        <begin position="1"/>
        <end position="159"/>
    </location>
</feature>
<feature type="coiled-coil region" evidence="1">
    <location>
        <begin position="2"/>
        <end position="77"/>
    </location>
</feature>
<keyword id="KW-0175">Coiled coil</keyword>
<keyword id="KW-0238">DNA-binding</keyword>
<keyword id="KW-1185">Reference proteome</keyword>
<keyword id="KW-0804">Transcription</keyword>
<keyword id="KW-0805">Transcription regulation</keyword>
<accession>Q181F4</accession>
<dbReference type="EMBL" id="AM180355">
    <property type="protein sequence ID" value="CAJ70459.1"/>
    <property type="molecule type" value="Genomic_DNA"/>
</dbReference>
<dbReference type="RefSeq" id="WP_003422204.1">
    <property type="nucleotide sequence ID" value="NZ_JAUPES010000007.1"/>
</dbReference>
<dbReference type="RefSeq" id="YP_001090076.1">
    <property type="nucleotide sequence ID" value="NC_009089.1"/>
</dbReference>
<dbReference type="SMR" id="Q181F4"/>
<dbReference type="STRING" id="272563.CD630_35530"/>
<dbReference type="EnsemblBacteria" id="CAJ70459">
    <property type="protein sequence ID" value="CAJ70459"/>
    <property type="gene ID" value="CD630_35530"/>
</dbReference>
<dbReference type="GeneID" id="66356018"/>
<dbReference type="KEGG" id="cdf:CD630_35530"/>
<dbReference type="KEGG" id="pdc:CDIF630_03873"/>
<dbReference type="PATRIC" id="fig|272563.120.peg.3756"/>
<dbReference type="eggNOG" id="COG0782">
    <property type="taxonomic scope" value="Bacteria"/>
</dbReference>
<dbReference type="OrthoDB" id="9808774at2"/>
<dbReference type="PhylomeDB" id="Q181F4"/>
<dbReference type="BioCyc" id="PDIF272563:G12WB-3739-MONOMER"/>
<dbReference type="Proteomes" id="UP000001978">
    <property type="component" value="Chromosome"/>
</dbReference>
<dbReference type="GO" id="GO:0003677">
    <property type="term" value="F:DNA binding"/>
    <property type="evidence" value="ECO:0007669"/>
    <property type="project" value="UniProtKB-UniRule"/>
</dbReference>
<dbReference type="GO" id="GO:0070063">
    <property type="term" value="F:RNA polymerase binding"/>
    <property type="evidence" value="ECO:0007669"/>
    <property type="project" value="InterPro"/>
</dbReference>
<dbReference type="GO" id="GO:0006354">
    <property type="term" value="P:DNA-templated transcription elongation"/>
    <property type="evidence" value="ECO:0007669"/>
    <property type="project" value="TreeGrafter"/>
</dbReference>
<dbReference type="GO" id="GO:0032784">
    <property type="term" value="P:regulation of DNA-templated transcription elongation"/>
    <property type="evidence" value="ECO:0007669"/>
    <property type="project" value="UniProtKB-UniRule"/>
</dbReference>
<dbReference type="FunFam" id="1.10.287.180:FF:000001">
    <property type="entry name" value="Transcription elongation factor GreA"/>
    <property type="match status" value="1"/>
</dbReference>
<dbReference type="FunFam" id="3.10.50.30:FF:000001">
    <property type="entry name" value="Transcription elongation factor GreA"/>
    <property type="match status" value="1"/>
</dbReference>
<dbReference type="Gene3D" id="3.10.50.30">
    <property type="entry name" value="Transcription elongation factor, GreA/GreB, C-terminal domain"/>
    <property type="match status" value="1"/>
</dbReference>
<dbReference type="Gene3D" id="1.10.287.180">
    <property type="entry name" value="Transcription elongation factor, GreA/GreB, N-terminal domain"/>
    <property type="match status" value="1"/>
</dbReference>
<dbReference type="HAMAP" id="MF_00105">
    <property type="entry name" value="GreA_GreB"/>
    <property type="match status" value="1"/>
</dbReference>
<dbReference type="InterPro" id="IPR036953">
    <property type="entry name" value="GreA/GreB_C_sf"/>
</dbReference>
<dbReference type="InterPro" id="IPR018151">
    <property type="entry name" value="TF_GreA/GreB_CS"/>
</dbReference>
<dbReference type="InterPro" id="IPR006359">
    <property type="entry name" value="Tscrpt_elong_fac_GreA"/>
</dbReference>
<dbReference type="InterPro" id="IPR028624">
    <property type="entry name" value="Tscrpt_elong_fac_GreA/B"/>
</dbReference>
<dbReference type="InterPro" id="IPR001437">
    <property type="entry name" value="Tscrpt_elong_fac_GreA/B_C"/>
</dbReference>
<dbReference type="InterPro" id="IPR023459">
    <property type="entry name" value="Tscrpt_elong_fac_GreA/B_fam"/>
</dbReference>
<dbReference type="InterPro" id="IPR022691">
    <property type="entry name" value="Tscrpt_elong_fac_GreA/B_N"/>
</dbReference>
<dbReference type="InterPro" id="IPR036805">
    <property type="entry name" value="Tscrpt_elong_fac_GreA/B_N_sf"/>
</dbReference>
<dbReference type="NCBIfam" id="TIGR01462">
    <property type="entry name" value="greA"/>
    <property type="match status" value="1"/>
</dbReference>
<dbReference type="NCBIfam" id="NF001263">
    <property type="entry name" value="PRK00226.1-4"/>
    <property type="match status" value="1"/>
</dbReference>
<dbReference type="PANTHER" id="PTHR30437">
    <property type="entry name" value="TRANSCRIPTION ELONGATION FACTOR GREA"/>
    <property type="match status" value="1"/>
</dbReference>
<dbReference type="PANTHER" id="PTHR30437:SF4">
    <property type="entry name" value="TRANSCRIPTION ELONGATION FACTOR GREA"/>
    <property type="match status" value="1"/>
</dbReference>
<dbReference type="Pfam" id="PF01272">
    <property type="entry name" value="GreA_GreB"/>
    <property type="match status" value="1"/>
</dbReference>
<dbReference type="Pfam" id="PF03449">
    <property type="entry name" value="GreA_GreB_N"/>
    <property type="match status" value="1"/>
</dbReference>
<dbReference type="PIRSF" id="PIRSF006092">
    <property type="entry name" value="GreA_GreB"/>
    <property type="match status" value="1"/>
</dbReference>
<dbReference type="SUPFAM" id="SSF54534">
    <property type="entry name" value="FKBP-like"/>
    <property type="match status" value="1"/>
</dbReference>
<dbReference type="SUPFAM" id="SSF46557">
    <property type="entry name" value="GreA transcript cleavage protein, N-terminal domain"/>
    <property type="match status" value="1"/>
</dbReference>
<dbReference type="PROSITE" id="PS00829">
    <property type="entry name" value="GREAB_1"/>
    <property type="match status" value="1"/>
</dbReference>
<organism>
    <name type="scientific">Clostridioides difficile (strain 630)</name>
    <name type="common">Peptoclostridium difficile</name>
    <dbReference type="NCBI Taxonomy" id="272563"/>
    <lineage>
        <taxon>Bacteria</taxon>
        <taxon>Bacillati</taxon>
        <taxon>Bacillota</taxon>
        <taxon>Clostridia</taxon>
        <taxon>Peptostreptococcales</taxon>
        <taxon>Peptostreptococcaceae</taxon>
        <taxon>Clostridioides</taxon>
    </lineage>
</organism>
<protein>
    <recommendedName>
        <fullName evidence="1">Transcription elongation factor GreA</fullName>
    </recommendedName>
    <alternativeName>
        <fullName evidence="1">Transcript cleavage factor GreA</fullName>
    </alternativeName>
</protein>
<sequence length="159" mass="18013">MEENKEFLLTQEGYDKLEEELENLKVVKRKEVAERIKVAISFGDLSENAEYDEAKKEQAQVEERILKLENMVRKAVIIDESKIDLNVVTIGSIVKVKDLEFDEEVEYTIVGSTEADPYDGKISNESPVGKALLGRAAKEVVEVQVPDGVAKFEILEIRR</sequence>
<evidence type="ECO:0000255" key="1">
    <source>
        <dbReference type="HAMAP-Rule" id="MF_00105"/>
    </source>
</evidence>
<comment type="function">
    <text evidence="1">Necessary for efficient RNA polymerase transcription elongation past template-encoded arresting sites. The arresting sites in DNA have the property of trapping a certain fraction of elongating RNA polymerases that pass through, resulting in locked ternary complexes. Cleavage of the nascent transcript by cleavage factors such as GreA or GreB allows the resumption of elongation from the new 3'terminus. GreA releases sequences of 2 to 3 nucleotides.</text>
</comment>
<comment type="similarity">
    <text evidence="1">Belongs to the GreA/GreB family.</text>
</comment>